<feature type="chain" id="PRO_0000097654" description="Transcriptional regulatory protein SDS3">
    <location>
        <begin position="1"/>
        <end position="327"/>
    </location>
</feature>
<feature type="region of interest" description="Disordered" evidence="2">
    <location>
        <begin position="151"/>
        <end position="240"/>
    </location>
</feature>
<feature type="region of interest" description="Disordered" evidence="2">
    <location>
        <begin position="268"/>
        <end position="299"/>
    </location>
</feature>
<feature type="coiled-coil region" evidence="1">
    <location>
        <begin position="61"/>
        <end position="135"/>
    </location>
</feature>
<feature type="compositionally biased region" description="Polar residues" evidence="2">
    <location>
        <begin position="151"/>
        <end position="170"/>
    </location>
</feature>
<feature type="modified residue" description="Phosphoserine" evidence="13">
    <location>
        <position position="166"/>
    </location>
</feature>
<feature type="modified residue" description="Phosphoserine" evidence="13">
    <location>
        <position position="211"/>
    </location>
</feature>
<feature type="helix" evidence="14">
    <location>
        <begin position="15"/>
        <end position="34"/>
    </location>
</feature>
<feature type="turn" evidence="14">
    <location>
        <begin position="36"/>
        <end position="38"/>
    </location>
</feature>
<feature type="helix" evidence="14">
    <location>
        <begin position="41"/>
        <end position="54"/>
    </location>
</feature>
<feature type="helix" evidence="14">
    <location>
        <begin position="62"/>
        <end position="140"/>
    </location>
</feature>
<feature type="helix" evidence="14">
    <location>
        <begin position="301"/>
        <end position="315"/>
    </location>
</feature>
<name>SDS3_YEAST</name>
<gene>
    <name type="primary">SDS3</name>
    <name type="ordered locus">YIL084C</name>
</gene>
<protein>
    <recommendedName>
        <fullName>Transcriptional regulatory protein SDS3</fullName>
    </recommendedName>
    <alternativeName>
        <fullName>Suppressor of defective silencing protein 3</fullName>
    </alternativeName>
</protein>
<comment type="function">
    <text evidence="3 4 5 11">Component of the RPD3C(L) histone deacetylase complex (HDAC) responsible for the deacetylation of lysine residues on the N-terminal part of the core histones (H2A, H2B, H3 and H4). Histone deacetylation gives a tag for epigenetic repression and plays an important role in transcriptional regulation, cell cycle progression and developmental events. SDS3 is required for the HDAC activity of the complex and for the RPD3-SIN3 association.</text>
</comment>
<comment type="subunit">
    <text evidence="3 4 6 9 10">Component of the RPD3C(L) complex composed of at least ASH1, CTI6, DEP1, PHO23, RPD3, RXT2, RXT3, SAP30, SDS3, SIN3, UME1 and UME6.</text>
</comment>
<comment type="subcellular location">
    <subcellularLocation>
        <location evidence="7">Nucleus</location>
    </subcellularLocation>
</comment>
<comment type="miscellaneous">
    <text evidence="8">Present with 105 molecules/cell in log phase SD medium.</text>
</comment>
<comment type="similarity">
    <text evidence="12">Belongs to the SDS3 family.</text>
</comment>
<dbReference type="EMBL" id="U62525">
    <property type="protein sequence ID" value="AAB40993.1"/>
    <property type="molecule type" value="Genomic_DNA"/>
</dbReference>
<dbReference type="EMBL" id="Z46728">
    <property type="protein sequence ID" value="CAA86710.1"/>
    <property type="molecule type" value="Genomic_DNA"/>
</dbReference>
<dbReference type="EMBL" id="AY692879">
    <property type="protein sequence ID" value="AAT92898.1"/>
    <property type="molecule type" value="Genomic_DNA"/>
</dbReference>
<dbReference type="EMBL" id="BK006942">
    <property type="protein sequence ID" value="DAA08468.1"/>
    <property type="molecule type" value="Genomic_DNA"/>
</dbReference>
<dbReference type="PIR" id="S49796">
    <property type="entry name" value="S49796"/>
</dbReference>
<dbReference type="RefSeq" id="NP_012182.1">
    <property type="nucleotide sequence ID" value="NM_001179432.1"/>
</dbReference>
<dbReference type="PDB" id="8GA8">
    <property type="method" value="EM"/>
    <property type="resolution" value="3.50 A"/>
    <property type="chains" value="H=1-327"/>
</dbReference>
<dbReference type="PDB" id="8HPO">
    <property type="method" value="EM"/>
    <property type="resolution" value="2.60 A"/>
    <property type="chains" value="D=1-327"/>
</dbReference>
<dbReference type="PDBsum" id="8GA8"/>
<dbReference type="PDBsum" id="8HPO"/>
<dbReference type="EMDB" id="EMD-29892"/>
<dbReference type="EMDB" id="EMD-34935"/>
<dbReference type="SMR" id="P40505"/>
<dbReference type="BioGRID" id="34908">
    <property type="interactions" value="812"/>
</dbReference>
<dbReference type="ComplexPortal" id="CPX-1852">
    <property type="entry name" value="RPD3L histone deacetylase complex"/>
</dbReference>
<dbReference type="DIP" id="DIP-2706N"/>
<dbReference type="FunCoup" id="P40505">
    <property type="interactions" value="174"/>
</dbReference>
<dbReference type="IntAct" id="P40505">
    <property type="interactions" value="25"/>
</dbReference>
<dbReference type="MINT" id="P40505"/>
<dbReference type="STRING" id="4932.YIL084C"/>
<dbReference type="GlyGen" id="P40505">
    <property type="glycosylation" value="2 sites, 1 O-linked glycan (2 sites)"/>
</dbReference>
<dbReference type="iPTMnet" id="P40505"/>
<dbReference type="PaxDb" id="4932-YIL084C"/>
<dbReference type="PeptideAtlas" id="P40505"/>
<dbReference type="EnsemblFungi" id="YIL084C_mRNA">
    <property type="protein sequence ID" value="YIL084C"/>
    <property type="gene ID" value="YIL084C"/>
</dbReference>
<dbReference type="GeneID" id="854725"/>
<dbReference type="KEGG" id="sce:YIL084C"/>
<dbReference type="AGR" id="SGD:S000001346"/>
<dbReference type="SGD" id="S000001346">
    <property type="gene designation" value="SDS3"/>
</dbReference>
<dbReference type="VEuPathDB" id="FungiDB:YIL084C"/>
<dbReference type="eggNOG" id="KOG4466">
    <property type="taxonomic scope" value="Eukaryota"/>
</dbReference>
<dbReference type="HOGENOM" id="CLU_067595_1_0_1"/>
<dbReference type="InParanoid" id="P40505"/>
<dbReference type="OMA" id="VANAHSY"/>
<dbReference type="OrthoDB" id="70376at2759"/>
<dbReference type="BioCyc" id="YEAST:G3O-31346-MONOMER"/>
<dbReference type="Reactome" id="R-SCE-3214815">
    <property type="pathway name" value="HDACs deacetylate histones"/>
</dbReference>
<dbReference type="Reactome" id="R-SCE-5689880">
    <property type="pathway name" value="Ub-specific processing proteases"/>
</dbReference>
<dbReference type="BioGRID-ORCS" id="854725">
    <property type="hits" value="0 hits in 10 CRISPR screens"/>
</dbReference>
<dbReference type="PRO" id="PR:P40505"/>
<dbReference type="Proteomes" id="UP000002311">
    <property type="component" value="Chromosome IX"/>
</dbReference>
<dbReference type="RNAct" id="P40505">
    <property type="molecule type" value="protein"/>
</dbReference>
<dbReference type="GO" id="GO:0005829">
    <property type="term" value="C:cytosol"/>
    <property type="evidence" value="ECO:0000314"/>
    <property type="project" value="SGD"/>
</dbReference>
<dbReference type="GO" id="GO:0005634">
    <property type="term" value="C:nucleus"/>
    <property type="evidence" value="ECO:0000314"/>
    <property type="project" value="SGD"/>
</dbReference>
<dbReference type="GO" id="GO:0033698">
    <property type="term" value="C:Rpd3L complex"/>
    <property type="evidence" value="ECO:0000314"/>
    <property type="project" value="SGD"/>
</dbReference>
<dbReference type="GO" id="GO:0070210">
    <property type="term" value="C:Rpd3L-Expanded complex"/>
    <property type="evidence" value="ECO:0007005"/>
    <property type="project" value="SGD"/>
</dbReference>
<dbReference type="GO" id="GO:0070822">
    <property type="term" value="C:Sin3-type complex"/>
    <property type="evidence" value="ECO:0000318"/>
    <property type="project" value="GO_Central"/>
</dbReference>
<dbReference type="GO" id="GO:0042826">
    <property type="term" value="F:histone deacetylase binding"/>
    <property type="evidence" value="ECO:0000318"/>
    <property type="project" value="GO_Central"/>
</dbReference>
<dbReference type="GO" id="GO:0043709">
    <property type="term" value="P:cell adhesion involved in single-species biofilm formation"/>
    <property type="evidence" value="ECO:0000315"/>
    <property type="project" value="SGD"/>
</dbReference>
<dbReference type="GO" id="GO:0034605">
    <property type="term" value="P:cellular response to heat"/>
    <property type="evidence" value="ECO:0000315"/>
    <property type="project" value="SGD"/>
</dbReference>
<dbReference type="GO" id="GO:0031507">
    <property type="term" value="P:heterochromatin formation"/>
    <property type="evidence" value="ECO:0000315"/>
    <property type="project" value="SGD"/>
</dbReference>
<dbReference type="GO" id="GO:0061188">
    <property type="term" value="P:negative regulation of rDNA heterochromatin formation"/>
    <property type="evidence" value="ECO:0000315"/>
    <property type="project" value="SGD"/>
</dbReference>
<dbReference type="GO" id="GO:0061186">
    <property type="term" value="P:negative regulation of silent mating-type cassette heterochromatin formation"/>
    <property type="evidence" value="ECO:0000315"/>
    <property type="project" value="SGD"/>
</dbReference>
<dbReference type="GO" id="GO:0000122">
    <property type="term" value="P:negative regulation of transcription by RNA polymerase II"/>
    <property type="evidence" value="ECO:0000315"/>
    <property type="project" value="SGD"/>
</dbReference>
<dbReference type="GO" id="GO:0006334">
    <property type="term" value="P:nucleosome assembly"/>
    <property type="evidence" value="ECO:0000303"/>
    <property type="project" value="ComplexPortal"/>
</dbReference>
<dbReference type="GO" id="GO:0045944">
    <property type="term" value="P:positive regulation of transcription by RNA polymerase II"/>
    <property type="evidence" value="ECO:0000315"/>
    <property type="project" value="SGD"/>
</dbReference>
<dbReference type="GO" id="GO:2000217">
    <property type="term" value="P:regulation of invasive growth in response to glucose limitation"/>
    <property type="evidence" value="ECO:0000315"/>
    <property type="project" value="SGD"/>
</dbReference>
<dbReference type="GO" id="GO:0006357">
    <property type="term" value="P:regulation of transcription by RNA polymerase II"/>
    <property type="evidence" value="ECO:0000303"/>
    <property type="project" value="ComplexPortal"/>
</dbReference>
<dbReference type="InterPro" id="IPR013907">
    <property type="entry name" value="Sds3"/>
</dbReference>
<dbReference type="PANTHER" id="PTHR21964">
    <property type="entry name" value="BREAST CANCER METASTASIS-SUPPRESSOR 1"/>
    <property type="match status" value="1"/>
</dbReference>
<dbReference type="Pfam" id="PF08598">
    <property type="entry name" value="Sds3"/>
    <property type="match status" value="1"/>
</dbReference>
<dbReference type="SMART" id="SM01401">
    <property type="entry name" value="Sds3"/>
    <property type="match status" value="1"/>
</dbReference>
<proteinExistence type="evidence at protein level"/>
<keyword id="KW-0002">3D-structure</keyword>
<keyword id="KW-0156">Chromatin regulator</keyword>
<keyword id="KW-0175">Coiled coil</keyword>
<keyword id="KW-0539">Nucleus</keyword>
<keyword id="KW-0597">Phosphoprotein</keyword>
<keyword id="KW-1185">Reference proteome</keyword>
<keyword id="KW-0678">Repressor</keyword>
<keyword id="KW-0804">Transcription</keyword>
<keyword id="KW-0805">Transcription regulation</keyword>
<reference key="1">
    <citation type="journal article" date="1996" name="Genetics">
        <title>Evidence that the transcriptional regulators SIN3 and RPD3, and a novel gene (SDS3) with similar functions, are involved in transcriptional silencing in S. cerevisiae.</title>
        <authorList>
            <person name="Vannier D."/>
            <person name="Balderes D."/>
            <person name="Shore D."/>
        </authorList>
    </citation>
    <scope>NUCLEOTIDE SEQUENCE [GENOMIC DNA]</scope>
    <scope>FUNCTION</scope>
    <source>
        <strain>ATCC 200060 / W303</strain>
    </source>
</reference>
<reference key="2">
    <citation type="journal article" date="1997" name="Nature">
        <title>The nucleotide sequence of Saccharomyces cerevisiae chromosome IX.</title>
        <authorList>
            <person name="Churcher C.M."/>
            <person name="Bowman S."/>
            <person name="Badcock K."/>
            <person name="Bankier A.T."/>
            <person name="Brown D."/>
            <person name="Chillingworth T."/>
            <person name="Connor R."/>
            <person name="Devlin K."/>
            <person name="Gentles S."/>
            <person name="Hamlin N."/>
            <person name="Harris D.E."/>
            <person name="Horsnell T."/>
            <person name="Hunt S."/>
            <person name="Jagels K."/>
            <person name="Jones M."/>
            <person name="Lye G."/>
            <person name="Moule S."/>
            <person name="Odell C."/>
            <person name="Pearson D."/>
            <person name="Rajandream M.A."/>
            <person name="Rice P."/>
            <person name="Rowley N."/>
            <person name="Skelton J."/>
            <person name="Smith V."/>
            <person name="Walsh S.V."/>
            <person name="Whitehead S."/>
            <person name="Barrell B.G."/>
        </authorList>
    </citation>
    <scope>NUCLEOTIDE SEQUENCE [LARGE SCALE GENOMIC DNA]</scope>
    <source>
        <strain>ATCC 204508 / S288c</strain>
    </source>
</reference>
<reference key="3">
    <citation type="journal article" date="2014" name="G3 (Bethesda)">
        <title>The reference genome sequence of Saccharomyces cerevisiae: Then and now.</title>
        <authorList>
            <person name="Engel S.R."/>
            <person name="Dietrich F.S."/>
            <person name="Fisk D.G."/>
            <person name="Binkley G."/>
            <person name="Balakrishnan R."/>
            <person name="Costanzo M.C."/>
            <person name="Dwight S.S."/>
            <person name="Hitz B.C."/>
            <person name="Karra K."/>
            <person name="Nash R.S."/>
            <person name="Weng S."/>
            <person name="Wong E.D."/>
            <person name="Lloyd P."/>
            <person name="Skrzypek M.S."/>
            <person name="Miyasato S.R."/>
            <person name="Simison M."/>
            <person name="Cherry J.M."/>
        </authorList>
    </citation>
    <scope>GENOME REANNOTATION</scope>
    <source>
        <strain>ATCC 204508 / S288c</strain>
    </source>
</reference>
<reference key="4">
    <citation type="journal article" date="2007" name="Genome Res.">
        <title>Approaching a complete repository of sequence-verified protein-encoding clones for Saccharomyces cerevisiae.</title>
        <authorList>
            <person name="Hu Y."/>
            <person name="Rolfs A."/>
            <person name="Bhullar B."/>
            <person name="Murthy T.V.S."/>
            <person name="Zhu C."/>
            <person name="Berger M.F."/>
            <person name="Camargo A.A."/>
            <person name="Kelley F."/>
            <person name="McCarron S."/>
            <person name="Jepson D."/>
            <person name="Richardson A."/>
            <person name="Raphael J."/>
            <person name="Moreira D."/>
            <person name="Taycher E."/>
            <person name="Zuo D."/>
            <person name="Mohr S."/>
            <person name="Kane M.F."/>
            <person name="Williamson J."/>
            <person name="Simpson A.J.G."/>
            <person name="Bulyk M.L."/>
            <person name="Harlow E."/>
            <person name="Marsischky G."/>
            <person name="Kolodner R.D."/>
            <person name="LaBaer J."/>
        </authorList>
    </citation>
    <scope>NUCLEOTIDE SEQUENCE [GENOMIC DNA]</scope>
    <source>
        <strain>ATCC 204508 / S288c</strain>
    </source>
</reference>
<reference key="5">
    <citation type="journal article" date="2000" name="Genetics">
        <title>Roles for the Saccharomyces cerevisiae SDS3, CBK1 and HYM1 genes in transcriptional repression by SIN3.</title>
        <authorList>
            <person name="Dorland S."/>
            <person name="Deegenaars M.L."/>
            <person name="Stillman D.J."/>
        </authorList>
    </citation>
    <scope>FUNCTION</scope>
    <scope>IDENTIFICATION IN THE RPD3 COMPLEX</scope>
</reference>
<reference key="6">
    <citation type="journal article" date="2000" name="J. Biol. Chem.">
        <title>Sds3 (suppressor of defective silencing 3) is an integral component of the yeast Sin3[middle dot]Rpd3 histone deacetylase complex and is required for histone deacetylase activity.</title>
        <authorList>
            <person name="Lechner T."/>
            <person name="Carrozza M.J."/>
            <person name="Yu Y."/>
            <person name="Grant P.A."/>
            <person name="Eberharter A."/>
            <person name="Vannier D."/>
            <person name="Brosch G."/>
            <person name="Stillman D.J."/>
            <person name="Shore D."/>
            <person name="Workman J.L."/>
        </authorList>
    </citation>
    <scope>FUNCTION</scope>
    <scope>IDENTIFICATION IN THE RPD3 COMPLEX</scope>
</reference>
<reference key="7">
    <citation type="journal article" date="2001" name="Mol. Genet. Genomics">
        <title>A role for Sds3p, a component of the Rpd3p/Sin3p deacetylase complex, in maintaining cellular integrity in Saccharomyces cerevisiae.</title>
        <authorList>
            <person name="Vannier D."/>
            <person name="Damay P."/>
            <person name="Shore D."/>
        </authorList>
    </citation>
    <scope>FUNCTION</scope>
</reference>
<reference key="8">
    <citation type="journal article" date="2003" name="J. Biol. Chem.">
        <title>Opposite role of yeast ING family members in p53-dependent transcriptional activation.</title>
        <authorList>
            <person name="Nourani A."/>
            <person name="Howe L."/>
            <person name="Pray-Grant M.G."/>
            <person name="Workman J.L."/>
            <person name="Grant P.A."/>
            <person name="Cote J."/>
        </authorList>
    </citation>
    <scope>IDENTIFICATION IN THE RPD3 COMPLEX</scope>
    <scope>IDENTIFICATION BY MASS SPECTROMETRY</scope>
</reference>
<reference key="9">
    <citation type="journal article" date="2003" name="Nature">
        <title>Global analysis of protein localization in budding yeast.</title>
        <authorList>
            <person name="Huh W.-K."/>
            <person name="Falvo J.V."/>
            <person name="Gerke L.C."/>
            <person name="Carroll A.S."/>
            <person name="Howson R.W."/>
            <person name="Weissman J.S."/>
            <person name="O'Shea E.K."/>
        </authorList>
    </citation>
    <scope>SUBCELLULAR LOCATION [LARGE SCALE ANALYSIS]</scope>
</reference>
<reference key="10">
    <citation type="journal article" date="2003" name="Nature">
        <title>Global analysis of protein expression in yeast.</title>
        <authorList>
            <person name="Ghaemmaghami S."/>
            <person name="Huh W.-K."/>
            <person name="Bower K."/>
            <person name="Howson R.W."/>
            <person name="Belle A."/>
            <person name="Dephoure N."/>
            <person name="O'Shea E.K."/>
            <person name="Weissman J.S."/>
        </authorList>
    </citation>
    <scope>LEVEL OF PROTEIN EXPRESSION [LARGE SCALE ANALYSIS]</scope>
</reference>
<reference key="11">
    <citation type="journal article" date="2005" name="Biochim. Biophys. Acta">
        <title>Stable incorporation of sequence specific repressors Ash1 and Ume6 into the Rpd3L complex.</title>
        <authorList>
            <person name="Carrozza M.J."/>
            <person name="Florens L."/>
            <person name="Swanson S.K."/>
            <person name="Shia W.-J."/>
            <person name="Anderson S."/>
            <person name="Yates J."/>
            <person name="Washburn M.P."/>
            <person name="Workman J.L."/>
        </authorList>
    </citation>
    <scope>IDENTIFICATION IN THE RPD3C(L) COMPLEX</scope>
    <scope>IDENTIFICATION BY MASS SPECTROMETRY</scope>
</reference>
<reference key="12">
    <citation type="journal article" date="2005" name="Cell">
        <title>Cotranscriptional set2 methylation of histone H3 lysine 36 recruits a repressive Rpd3 complex.</title>
        <authorList>
            <person name="Keogh M.-C."/>
            <person name="Kurdistani S.K."/>
            <person name="Morris S.A."/>
            <person name="Ahn S.H."/>
            <person name="Podolny V."/>
            <person name="Collins S.R."/>
            <person name="Schuldiner M."/>
            <person name="Chin K."/>
            <person name="Punna T."/>
            <person name="Thompson N.J."/>
            <person name="Boone C."/>
            <person name="Emili A."/>
            <person name="Weissman J.S."/>
            <person name="Hughes T.R."/>
            <person name="Strahl B.D."/>
            <person name="Grunstein M."/>
            <person name="Greenblatt J.F."/>
            <person name="Buratowski S."/>
            <person name="Krogan N.J."/>
        </authorList>
    </citation>
    <scope>IDENTIFICATION IN THE RPD3C(L) COMPLEX</scope>
    <scope>IDENTIFICATION BY MASS SPECTROMETRY</scope>
</reference>
<reference key="13">
    <citation type="journal article" date="2009" name="Science">
        <title>Global analysis of Cdk1 substrate phosphorylation sites provides insights into evolution.</title>
        <authorList>
            <person name="Holt L.J."/>
            <person name="Tuch B.B."/>
            <person name="Villen J."/>
            <person name="Johnson A.D."/>
            <person name="Gygi S.P."/>
            <person name="Morgan D.O."/>
        </authorList>
    </citation>
    <scope>PHOSPHORYLATION [LARGE SCALE ANALYSIS] AT SER-166 AND SER-211</scope>
    <scope>IDENTIFICATION BY MASS SPECTROMETRY [LARGE SCALE ANALYSIS]</scope>
</reference>
<reference key="14">
    <citation type="journal article" date="2012" name="Proc. Natl. Acad. Sci. U.S.A.">
        <title>N-terminal acetylome analyses and functional insights of the N-terminal acetyltransferase NatB.</title>
        <authorList>
            <person name="Van Damme P."/>
            <person name="Lasa M."/>
            <person name="Polevoda B."/>
            <person name="Gazquez C."/>
            <person name="Elosegui-Artola A."/>
            <person name="Kim D.S."/>
            <person name="De Juan-Pardo E."/>
            <person name="Demeyer K."/>
            <person name="Hole K."/>
            <person name="Larrea E."/>
            <person name="Timmerman E."/>
            <person name="Prieto J."/>
            <person name="Arnesen T."/>
            <person name="Sherman F."/>
            <person name="Gevaert K."/>
            <person name="Aldabe R."/>
        </authorList>
    </citation>
    <scope>IDENTIFICATION BY MASS SPECTROMETRY [LARGE SCALE ANALYSIS]</scope>
</reference>
<organism>
    <name type="scientific">Saccharomyces cerevisiae (strain ATCC 204508 / S288c)</name>
    <name type="common">Baker's yeast</name>
    <dbReference type="NCBI Taxonomy" id="559292"/>
    <lineage>
        <taxon>Eukaryota</taxon>
        <taxon>Fungi</taxon>
        <taxon>Dikarya</taxon>
        <taxon>Ascomycota</taxon>
        <taxon>Saccharomycotina</taxon>
        <taxon>Saccharomycetes</taxon>
        <taxon>Saccharomycetales</taxon>
        <taxon>Saccharomycetaceae</taxon>
        <taxon>Saccharomyces</taxon>
    </lineage>
</organism>
<accession>P40505</accession>
<accession>D6VVK2</accession>
<evidence type="ECO:0000255" key="1"/>
<evidence type="ECO:0000256" key="2">
    <source>
        <dbReference type="SAM" id="MobiDB-lite"/>
    </source>
</evidence>
<evidence type="ECO:0000269" key="3">
    <source>
    </source>
</evidence>
<evidence type="ECO:0000269" key="4">
    <source>
    </source>
</evidence>
<evidence type="ECO:0000269" key="5">
    <source>
    </source>
</evidence>
<evidence type="ECO:0000269" key="6">
    <source>
    </source>
</evidence>
<evidence type="ECO:0000269" key="7">
    <source>
    </source>
</evidence>
<evidence type="ECO:0000269" key="8">
    <source>
    </source>
</evidence>
<evidence type="ECO:0000269" key="9">
    <source>
    </source>
</evidence>
<evidence type="ECO:0000269" key="10">
    <source>
    </source>
</evidence>
<evidence type="ECO:0000269" key="11">
    <source>
    </source>
</evidence>
<evidence type="ECO:0000305" key="12"/>
<evidence type="ECO:0007744" key="13">
    <source>
    </source>
</evidence>
<evidence type="ECO:0007829" key="14">
    <source>
        <dbReference type="PDB" id="8HPO"/>
    </source>
</evidence>
<sequence length="327" mass="37625">MAIQKVSNKDLSRKDKRRFNIESKVNKIYQNFYSERDNQYKDRLTALQTDLTSLHQGDNGQYARQVRDLEEERDLELVRLRLFEEYRVSRSGIEFQEDIEKAKAEHEKLIKLCKERLYSSIEQKIKKLQEERLLMDVANVHSYAMNYSRPQYQKNTRSHTVSGWDSSSNEYGRDTANESATDTGAGNDRRTLRRRNASKDTRGNNNNQDESDFQTGNGSGSNGHGSRQGSQFPHFNNLTYKSGMNSDSDFLQGINEGTDLYAFLFGEKNPKDNANGNEKKKNRGAQRYSTKTAPPLQSLKPDEVTEDISLIRELTGQPPAPFRLRSD</sequence>